<comment type="function">
    <text evidence="1">Promotes dimerization of NF-kappa-B subunits and regulates NF-kappa-B transcription factor activity. Promotes growth of cardiomyocytes, but not cardiomyocyte proliferation. Promotes cardiac muscle hypertrophy. Plays a role in the regulation of the growth of actin filaments. Inhibits the activity of the F-actin-capping protein complex formed by the CAPZA1 and CAPZB heterodimer (By similarity).</text>
</comment>
<comment type="subunit">
    <text evidence="1">Interacts with RELA. Interacts with the heterodimer formed by CAPZA1 and CAPZB (By similarity).</text>
</comment>
<comment type="subcellular location">
    <subcellularLocation>
        <location evidence="1">Cytoplasm</location>
    </subcellularLocation>
    <subcellularLocation>
        <location evidence="1">Nucleus</location>
    </subcellularLocation>
    <subcellularLocation>
        <location evidence="1">Cytoplasm</location>
        <location evidence="1">Perinuclear region</location>
    </subcellularLocation>
</comment>
<comment type="similarity">
    <text evidence="4">Belongs to the myotrophin family.</text>
</comment>
<feature type="initiator methionine" description="Removed" evidence="3">
    <location>
        <position position="1"/>
    </location>
</feature>
<feature type="chain" id="PRO_0000067030" description="Myotrophin">
    <location>
        <begin position="2"/>
        <end position="118"/>
    </location>
</feature>
<feature type="repeat" description="ANK 1">
    <location>
        <begin position="2"/>
        <end position="30"/>
    </location>
</feature>
<feature type="repeat" description="ANK 2">
    <location>
        <begin position="34"/>
        <end position="66"/>
    </location>
</feature>
<feature type="repeat" description="ANK 3">
    <location>
        <begin position="67"/>
        <end position="99"/>
    </location>
</feature>
<feature type="modified residue" description="N-acetylcysteine" evidence="3">
    <location>
        <position position="2"/>
    </location>
</feature>
<feature type="modified residue" description="N6-acetyllysine" evidence="2">
    <location>
        <position position="4"/>
    </location>
</feature>
<feature type="modified residue" description="N6-acetyllysine" evidence="2">
    <location>
        <position position="11"/>
    </location>
</feature>
<feature type="modified residue" description="N6-acetyllysine" evidence="2">
    <location>
        <position position="24"/>
    </location>
</feature>
<feature type="modified residue" description="Phosphothreonine" evidence="2">
    <location>
        <position position="31"/>
    </location>
</feature>
<protein>
    <recommendedName>
        <fullName>Myotrophin</fullName>
    </recommendedName>
</protein>
<dbReference type="EMBL" id="AY266681">
    <property type="protein sequence ID" value="AAP23872.1"/>
    <property type="molecule type" value="mRNA"/>
</dbReference>
<dbReference type="RefSeq" id="NP_001002989.1">
    <property type="nucleotide sequence ID" value="NM_001002989.1"/>
</dbReference>
<dbReference type="BMRB" id="Q863Z4"/>
<dbReference type="SMR" id="Q863Z4"/>
<dbReference type="FunCoup" id="Q863Z4">
    <property type="interactions" value="1101"/>
</dbReference>
<dbReference type="STRING" id="9615.ENSCAFP00000039244"/>
<dbReference type="PaxDb" id="9612-ENSCAFP00000039244"/>
<dbReference type="Ensembl" id="ENSCAFT00030018938.1">
    <property type="protein sequence ID" value="ENSCAFP00030016529.1"/>
    <property type="gene ID" value="ENSCAFG00030010231.1"/>
</dbReference>
<dbReference type="Ensembl" id="ENSCAFT00040029969.1">
    <property type="protein sequence ID" value="ENSCAFP00040026036.1"/>
    <property type="gene ID" value="ENSCAFG00040016241.1"/>
</dbReference>
<dbReference type="GeneID" id="403487"/>
<dbReference type="KEGG" id="cfa:403487"/>
<dbReference type="CTD" id="136319"/>
<dbReference type="eggNOG" id="KOG4214">
    <property type="taxonomic scope" value="Eukaryota"/>
</dbReference>
<dbReference type="HOGENOM" id="CLU_000134_45_7_1"/>
<dbReference type="InParanoid" id="Q863Z4"/>
<dbReference type="OMA" id="TALIDCT"/>
<dbReference type="OrthoDB" id="194358at2759"/>
<dbReference type="TreeFam" id="TF327387"/>
<dbReference type="Proteomes" id="UP000002254">
    <property type="component" value="Unplaced"/>
</dbReference>
<dbReference type="Proteomes" id="UP000694429">
    <property type="component" value="Chromosome 16"/>
</dbReference>
<dbReference type="Proteomes" id="UP000694542">
    <property type="component" value="Chromosome 16"/>
</dbReference>
<dbReference type="Proteomes" id="UP000805418">
    <property type="component" value="Unplaced"/>
</dbReference>
<dbReference type="Bgee" id="ENSCAFG00000028992">
    <property type="expression patterns" value="Expressed in prefrontal cortex and 45 other cell types or tissues"/>
</dbReference>
<dbReference type="GO" id="GO:0030424">
    <property type="term" value="C:axon"/>
    <property type="evidence" value="ECO:0000250"/>
    <property type="project" value="AgBase"/>
</dbReference>
<dbReference type="GO" id="GO:0005737">
    <property type="term" value="C:cytoplasm"/>
    <property type="evidence" value="ECO:0000250"/>
    <property type="project" value="AgBase"/>
</dbReference>
<dbReference type="GO" id="GO:0005829">
    <property type="term" value="C:cytosol"/>
    <property type="evidence" value="ECO:0000250"/>
    <property type="project" value="UniProtKB"/>
</dbReference>
<dbReference type="GO" id="GO:0005634">
    <property type="term" value="C:nucleus"/>
    <property type="evidence" value="ECO:0000250"/>
    <property type="project" value="UniProtKB"/>
</dbReference>
<dbReference type="GO" id="GO:0048471">
    <property type="term" value="C:perinuclear region of cytoplasm"/>
    <property type="evidence" value="ECO:0007669"/>
    <property type="project" value="UniProtKB-SubCell"/>
</dbReference>
<dbReference type="GO" id="GO:0010613">
    <property type="term" value="P:positive regulation of cardiac muscle hypertrophy"/>
    <property type="evidence" value="ECO:0000250"/>
    <property type="project" value="UniProtKB"/>
</dbReference>
<dbReference type="GO" id="GO:0030307">
    <property type="term" value="P:positive regulation of cell growth"/>
    <property type="evidence" value="ECO:0000250"/>
    <property type="project" value="UniProtKB"/>
</dbReference>
<dbReference type="GO" id="GO:0010557">
    <property type="term" value="P:positive regulation of macromolecule biosynthetic process"/>
    <property type="evidence" value="ECO:0000250"/>
    <property type="project" value="UniProtKB"/>
</dbReference>
<dbReference type="GO" id="GO:0051092">
    <property type="term" value="P:positive regulation of NF-kappaB transcription factor activity"/>
    <property type="evidence" value="ECO:0000250"/>
    <property type="project" value="UniProtKB"/>
</dbReference>
<dbReference type="GO" id="GO:0051247">
    <property type="term" value="P:positive regulation of protein metabolic process"/>
    <property type="evidence" value="ECO:0000250"/>
    <property type="project" value="UniProtKB"/>
</dbReference>
<dbReference type="GO" id="GO:2000812">
    <property type="term" value="P:regulation of barbed-end actin filament capping"/>
    <property type="evidence" value="ECO:0000250"/>
    <property type="project" value="UniProtKB"/>
</dbReference>
<dbReference type="FunFam" id="1.25.40.20:FF:000118">
    <property type="entry name" value="Myotrophin"/>
    <property type="match status" value="1"/>
</dbReference>
<dbReference type="Gene3D" id="1.25.40.20">
    <property type="entry name" value="Ankyrin repeat-containing domain"/>
    <property type="match status" value="1"/>
</dbReference>
<dbReference type="InterPro" id="IPR002110">
    <property type="entry name" value="Ankyrin_rpt"/>
</dbReference>
<dbReference type="InterPro" id="IPR036770">
    <property type="entry name" value="Ankyrin_rpt-contain_sf"/>
</dbReference>
<dbReference type="PANTHER" id="PTHR24171">
    <property type="entry name" value="ANKYRIN REPEAT DOMAIN-CONTAINING PROTEIN 39-RELATED"/>
    <property type="match status" value="1"/>
</dbReference>
<dbReference type="PANTHER" id="PTHR24171:SF8">
    <property type="entry name" value="BRCA1-ASSOCIATED RING DOMAIN PROTEIN 1"/>
    <property type="match status" value="1"/>
</dbReference>
<dbReference type="Pfam" id="PF12796">
    <property type="entry name" value="Ank_2"/>
    <property type="match status" value="1"/>
</dbReference>
<dbReference type="PRINTS" id="PR01415">
    <property type="entry name" value="ANKYRIN"/>
</dbReference>
<dbReference type="SMART" id="SM00248">
    <property type="entry name" value="ANK"/>
    <property type="match status" value="2"/>
</dbReference>
<dbReference type="SUPFAM" id="SSF48403">
    <property type="entry name" value="Ankyrin repeat"/>
    <property type="match status" value="1"/>
</dbReference>
<dbReference type="PROSITE" id="PS50297">
    <property type="entry name" value="ANK_REP_REGION"/>
    <property type="match status" value="1"/>
</dbReference>
<dbReference type="PROSITE" id="PS50088">
    <property type="entry name" value="ANK_REPEAT"/>
    <property type="match status" value="2"/>
</dbReference>
<name>MTPN_CANLF</name>
<sequence length="118" mass="12895">MCDKEFMWALKNGDLDEVKDYVAKGEDVNRTLEGGRKPLHYAADCGQLEILEFLLLKGADINAPDKHHITPLLSAVYEGHVSCVKLLLSKGADKTVKGPDGLTAFEATDNQAIKALLQ</sequence>
<keyword id="KW-0007">Acetylation</keyword>
<keyword id="KW-0040">ANK repeat</keyword>
<keyword id="KW-0963">Cytoplasm</keyword>
<keyword id="KW-0539">Nucleus</keyword>
<keyword id="KW-0597">Phosphoprotein</keyword>
<keyword id="KW-1185">Reference proteome</keyword>
<keyword id="KW-0677">Repeat</keyword>
<evidence type="ECO:0000250" key="1"/>
<evidence type="ECO:0000250" key="2">
    <source>
        <dbReference type="UniProtKB" id="P58546"/>
    </source>
</evidence>
<evidence type="ECO:0000250" key="3">
    <source>
        <dbReference type="UniProtKB" id="P62774"/>
    </source>
</evidence>
<evidence type="ECO:0000305" key="4"/>
<organism>
    <name type="scientific">Canis lupus familiaris</name>
    <name type="common">Dog</name>
    <name type="synonym">Canis familiaris</name>
    <dbReference type="NCBI Taxonomy" id="9615"/>
    <lineage>
        <taxon>Eukaryota</taxon>
        <taxon>Metazoa</taxon>
        <taxon>Chordata</taxon>
        <taxon>Craniata</taxon>
        <taxon>Vertebrata</taxon>
        <taxon>Euteleostomi</taxon>
        <taxon>Mammalia</taxon>
        <taxon>Eutheria</taxon>
        <taxon>Laurasiatheria</taxon>
        <taxon>Carnivora</taxon>
        <taxon>Caniformia</taxon>
        <taxon>Canidae</taxon>
        <taxon>Canis</taxon>
    </lineage>
</organism>
<gene>
    <name type="primary">MTPN</name>
</gene>
<reference key="1">
    <citation type="submission" date="2003-04" db="EMBL/GenBank/DDBJ databases">
        <title>Cloning and sequencing of cardiac myotrophin gene.</title>
        <authorList>
            <person name="Mishra S."/>
            <person name="Rastogi S."/>
            <person name="Sabbah H.N."/>
            <person name="Gupta R.C."/>
        </authorList>
    </citation>
    <scope>NUCLEOTIDE SEQUENCE [MRNA]</scope>
    <source>
        <tissue>Heart</tissue>
    </source>
</reference>
<proteinExistence type="inferred from homology"/>
<accession>Q863Z4</accession>